<evidence type="ECO:0000255" key="1">
    <source>
        <dbReference type="HAMAP-Rule" id="MF_01310"/>
    </source>
</evidence>
<evidence type="ECO:0000305" key="2"/>
<reference key="1">
    <citation type="journal article" date="2008" name="BMC Genomics">
        <title>Chloroplast genome sequencing analysis of Heterosigma akashiwo CCMP452 (West Atlantic) and NIES293 (West Pacific) strains.</title>
        <authorList>
            <person name="Cattolico R.A."/>
            <person name="Jacobs M.A."/>
            <person name="Zhou Y."/>
            <person name="Chang J."/>
            <person name="Duplessis M."/>
            <person name="Lybrand T."/>
            <person name="McKay J."/>
            <person name="Ong H.C."/>
            <person name="Sims E."/>
            <person name="Rocap G."/>
        </authorList>
    </citation>
    <scope>NUCLEOTIDE SEQUENCE [LARGE SCALE GENOMIC DNA]</scope>
</reference>
<comment type="subunit">
    <text evidence="1">Part of the 30S ribosomal subunit.</text>
</comment>
<comment type="subcellular location">
    <subcellularLocation>
        <location>Plastid</location>
        <location>Chloroplast</location>
    </subcellularLocation>
</comment>
<comment type="similarity">
    <text evidence="1">Belongs to the universal ribosomal protein uS11 family.</text>
</comment>
<proteinExistence type="inferred from homology"/>
<organism>
    <name type="scientific">Heterosigma akashiwo (strain NIES-293 / 8280G21-1)</name>
    <dbReference type="NCBI Taxonomy" id="536047"/>
    <lineage>
        <taxon>Eukaryota</taxon>
        <taxon>Sar</taxon>
        <taxon>Stramenopiles</taxon>
        <taxon>Ochrophyta</taxon>
        <taxon>Raphidophyceae</taxon>
        <taxon>Chattonellales</taxon>
        <taxon>Chattonellaceae</taxon>
        <taxon>Heterosigma</taxon>
    </lineage>
</organism>
<sequence>MIKQIKRKKVKKNVVVGVVHIQASFNNTIVTITDLGGNTLSTGSAGAVGFKGARKGTPFAAQLASEKAAEKATEYGLKKVEVLVKGQGSGRETAVRAIQNSDIEITAITDITSIPFNGCRPPKRRRV</sequence>
<geneLocation type="chloroplast"/>
<gene>
    <name evidence="1" type="primary">rps11</name>
    <name type="ordered locus">Heak293_Cp126</name>
</gene>
<protein>
    <recommendedName>
        <fullName evidence="1">Small ribosomal subunit protein uS11c</fullName>
    </recommendedName>
    <alternativeName>
        <fullName evidence="2">30S ribosomal protein S11, chloroplastic</fullName>
    </alternativeName>
</protein>
<name>RR11_HETA2</name>
<accession>B2XTD5</accession>
<keyword id="KW-0150">Chloroplast</keyword>
<keyword id="KW-0934">Plastid</keyword>
<keyword id="KW-0687">Ribonucleoprotein</keyword>
<keyword id="KW-0689">Ribosomal protein</keyword>
<keyword id="KW-0694">RNA-binding</keyword>
<keyword id="KW-0699">rRNA-binding</keyword>
<feature type="chain" id="PRO_0000364224" description="Small ribosomal subunit protein uS11c">
    <location>
        <begin position="1"/>
        <end position="127"/>
    </location>
</feature>
<dbReference type="EMBL" id="EU168190">
    <property type="protein sequence ID" value="ABV66033.1"/>
    <property type="molecule type" value="Genomic_DNA"/>
</dbReference>
<dbReference type="RefSeq" id="YP_001936427.1">
    <property type="nucleotide sequence ID" value="NC_010772.1"/>
</dbReference>
<dbReference type="SMR" id="B2XTD5"/>
<dbReference type="GeneID" id="6335651"/>
<dbReference type="GO" id="GO:0009507">
    <property type="term" value="C:chloroplast"/>
    <property type="evidence" value="ECO:0007669"/>
    <property type="project" value="UniProtKB-SubCell"/>
</dbReference>
<dbReference type="GO" id="GO:1990904">
    <property type="term" value="C:ribonucleoprotein complex"/>
    <property type="evidence" value="ECO:0007669"/>
    <property type="project" value="UniProtKB-KW"/>
</dbReference>
<dbReference type="GO" id="GO:0005840">
    <property type="term" value="C:ribosome"/>
    <property type="evidence" value="ECO:0007669"/>
    <property type="project" value="UniProtKB-KW"/>
</dbReference>
<dbReference type="GO" id="GO:0019843">
    <property type="term" value="F:rRNA binding"/>
    <property type="evidence" value="ECO:0007669"/>
    <property type="project" value="UniProtKB-UniRule"/>
</dbReference>
<dbReference type="GO" id="GO:0003735">
    <property type="term" value="F:structural constituent of ribosome"/>
    <property type="evidence" value="ECO:0007669"/>
    <property type="project" value="InterPro"/>
</dbReference>
<dbReference type="GO" id="GO:0006412">
    <property type="term" value="P:translation"/>
    <property type="evidence" value="ECO:0007669"/>
    <property type="project" value="UniProtKB-UniRule"/>
</dbReference>
<dbReference type="FunFam" id="3.30.420.80:FF:000010">
    <property type="entry name" value="30S ribosomal protein S11"/>
    <property type="match status" value="1"/>
</dbReference>
<dbReference type="Gene3D" id="3.30.420.80">
    <property type="entry name" value="Ribosomal protein S11"/>
    <property type="match status" value="1"/>
</dbReference>
<dbReference type="HAMAP" id="MF_01310">
    <property type="entry name" value="Ribosomal_uS11"/>
    <property type="match status" value="1"/>
</dbReference>
<dbReference type="InterPro" id="IPR001971">
    <property type="entry name" value="Ribosomal_uS11"/>
</dbReference>
<dbReference type="InterPro" id="IPR019981">
    <property type="entry name" value="Ribosomal_uS11_bac-type"/>
</dbReference>
<dbReference type="InterPro" id="IPR036967">
    <property type="entry name" value="Ribosomal_uS11_sf"/>
</dbReference>
<dbReference type="NCBIfam" id="NF003698">
    <property type="entry name" value="PRK05309.1"/>
    <property type="match status" value="1"/>
</dbReference>
<dbReference type="NCBIfam" id="TIGR03632">
    <property type="entry name" value="uS11_bact"/>
    <property type="match status" value="1"/>
</dbReference>
<dbReference type="PANTHER" id="PTHR11759">
    <property type="entry name" value="40S RIBOSOMAL PROTEIN S14/30S RIBOSOMAL PROTEIN S11"/>
    <property type="match status" value="1"/>
</dbReference>
<dbReference type="Pfam" id="PF00411">
    <property type="entry name" value="Ribosomal_S11"/>
    <property type="match status" value="1"/>
</dbReference>
<dbReference type="PIRSF" id="PIRSF002131">
    <property type="entry name" value="Ribosomal_S11"/>
    <property type="match status" value="1"/>
</dbReference>
<dbReference type="SUPFAM" id="SSF53137">
    <property type="entry name" value="Translational machinery components"/>
    <property type="match status" value="1"/>
</dbReference>